<name>EFP_SHEFN</name>
<keyword id="KW-0963">Cytoplasm</keyword>
<keyword id="KW-0251">Elongation factor</keyword>
<keyword id="KW-0648">Protein biosynthesis</keyword>
<keyword id="KW-1185">Reference proteome</keyword>
<reference key="1">
    <citation type="submission" date="2006-08" db="EMBL/GenBank/DDBJ databases">
        <title>Complete sequence of Shewanella frigidimarina NCIMB 400.</title>
        <authorList>
            <consortium name="US DOE Joint Genome Institute"/>
            <person name="Copeland A."/>
            <person name="Lucas S."/>
            <person name="Lapidus A."/>
            <person name="Barry K."/>
            <person name="Detter J.C."/>
            <person name="Glavina del Rio T."/>
            <person name="Hammon N."/>
            <person name="Israni S."/>
            <person name="Dalin E."/>
            <person name="Tice H."/>
            <person name="Pitluck S."/>
            <person name="Fredrickson J.K."/>
            <person name="Kolker E."/>
            <person name="McCuel L.A."/>
            <person name="DiChristina T."/>
            <person name="Nealson K.H."/>
            <person name="Newman D."/>
            <person name="Tiedje J.M."/>
            <person name="Zhou J."/>
            <person name="Romine M.F."/>
            <person name="Culley D.E."/>
            <person name="Serres M."/>
            <person name="Chertkov O."/>
            <person name="Brettin T."/>
            <person name="Bruce D."/>
            <person name="Han C."/>
            <person name="Tapia R."/>
            <person name="Gilna P."/>
            <person name="Schmutz J."/>
            <person name="Larimer F."/>
            <person name="Land M."/>
            <person name="Hauser L."/>
            <person name="Kyrpides N."/>
            <person name="Mikhailova N."/>
            <person name="Richardson P."/>
        </authorList>
    </citation>
    <scope>NUCLEOTIDE SEQUENCE [LARGE SCALE GENOMIC DNA]</scope>
    <source>
        <strain>NCIMB 400</strain>
    </source>
</reference>
<comment type="function">
    <text evidence="1">Involved in peptide bond synthesis. Stimulates efficient translation and peptide-bond synthesis on native or reconstituted 70S ribosomes in vitro. Probably functions indirectly by altering the affinity of the ribosome for aminoacyl-tRNA, thus increasing their reactivity as acceptors for peptidyl transferase.</text>
</comment>
<comment type="pathway">
    <text evidence="1">Protein biosynthesis; polypeptide chain elongation.</text>
</comment>
<comment type="subcellular location">
    <subcellularLocation>
        <location evidence="1">Cytoplasm</location>
    </subcellularLocation>
</comment>
<comment type="similarity">
    <text evidence="1">Belongs to the elongation factor P family.</text>
</comment>
<protein>
    <recommendedName>
        <fullName evidence="1">Elongation factor P</fullName>
        <shortName evidence="1">EF-P</shortName>
    </recommendedName>
</protein>
<proteinExistence type="inferred from homology"/>
<sequence length="186" mass="20729">MKTAHEIRPGNVIMLDGSPWVVQKTETTRSGRNAAIVKLKLKNVLLDSGTEQTFKGEDKLDDIILERLDCTYSYFADPMYVFMDEEYNQYDVEADNLGDAADYIIDGMEDVCQVTFYEGKAISVELPVHIVREVIYTEPSARGDTSGKVMKPATITGGGTVTVADFVKVGDKIEIDTRTGEFKKRV</sequence>
<organism>
    <name type="scientific">Shewanella frigidimarina (strain NCIMB 400)</name>
    <dbReference type="NCBI Taxonomy" id="318167"/>
    <lineage>
        <taxon>Bacteria</taxon>
        <taxon>Pseudomonadati</taxon>
        <taxon>Pseudomonadota</taxon>
        <taxon>Gammaproteobacteria</taxon>
        <taxon>Alteromonadales</taxon>
        <taxon>Shewanellaceae</taxon>
        <taxon>Shewanella</taxon>
    </lineage>
</organism>
<gene>
    <name evidence="1" type="primary">efp</name>
    <name type="ordered locus">Sfri_1908</name>
</gene>
<dbReference type="EMBL" id="CP000447">
    <property type="protein sequence ID" value="ABI71754.1"/>
    <property type="molecule type" value="Genomic_DNA"/>
</dbReference>
<dbReference type="RefSeq" id="WP_011637369.1">
    <property type="nucleotide sequence ID" value="NC_008345.1"/>
</dbReference>
<dbReference type="SMR" id="Q082R1"/>
<dbReference type="STRING" id="318167.Sfri_1908"/>
<dbReference type="KEGG" id="sfr:Sfri_1908"/>
<dbReference type="eggNOG" id="COG0231">
    <property type="taxonomic scope" value="Bacteria"/>
</dbReference>
<dbReference type="HOGENOM" id="CLU_074944_2_1_6"/>
<dbReference type="OrthoDB" id="9801844at2"/>
<dbReference type="UniPathway" id="UPA00345"/>
<dbReference type="Proteomes" id="UP000000684">
    <property type="component" value="Chromosome"/>
</dbReference>
<dbReference type="GO" id="GO:0005737">
    <property type="term" value="C:cytoplasm"/>
    <property type="evidence" value="ECO:0007669"/>
    <property type="project" value="UniProtKB-SubCell"/>
</dbReference>
<dbReference type="GO" id="GO:0003746">
    <property type="term" value="F:translation elongation factor activity"/>
    <property type="evidence" value="ECO:0007669"/>
    <property type="project" value="UniProtKB-UniRule"/>
</dbReference>
<dbReference type="GO" id="GO:0043043">
    <property type="term" value="P:peptide biosynthetic process"/>
    <property type="evidence" value="ECO:0007669"/>
    <property type="project" value="InterPro"/>
</dbReference>
<dbReference type="CDD" id="cd04470">
    <property type="entry name" value="S1_EF-P_repeat_1"/>
    <property type="match status" value="1"/>
</dbReference>
<dbReference type="CDD" id="cd05794">
    <property type="entry name" value="S1_EF-P_repeat_2"/>
    <property type="match status" value="1"/>
</dbReference>
<dbReference type="FunFam" id="2.30.30.30:FF:000003">
    <property type="entry name" value="Elongation factor P"/>
    <property type="match status" value="1"/>
</dbReference>
<dbReference type="FunFam" id="2.40.50.140:FF:000004">
    <property type="entry name" value="Elongation factor P"/>
    <property type="match status" value="1"/>
</dbReference>
<dbReference type="FunFam" id="2.40.50.140:FF:000009">
    <property type="entry name" value="Elongation factor P"/>
    <property type="match status" value="1"/>
</dbReference>
<dbReference type="Gene3D" id="2.30.30.30">
    <property type="match status" value="1"/>
</dbReference>
<dbReference type="Gene3D" id="2.40.50.140">
    <property type="entry name" value="Nucleic acid-binding proteins"/>
    <property type="match status" value="2"/>
</dbReference>
<dbReference type="HAMAP" id="MF_00141">
    <property type="entry name" value="EF_P"/>
    <property type="match status" value="1"/>
</dbReference>
<dbReference type="InterPro" id="IPR015365">
    <property type="entry name" value="Elong-fact-P_C"/>
</dbReference>
<dbReference type="InterPro" id="IPR012340">
    <property type="entry name" value="NA-bd_OB-fold"/>
</dbReference>
<dbReference type="InterPro" id="IPR014722">
    <property type="entry name" value="Rib_uL2_dom2"/>
</dbReference>
<dbReference type="InterPro" id="IPR020599">
    <property type="entry name" value="Transl_elong_fac_P/YeiP"/>
</dbReference>
<dbReference type="InterPro" id="IPR013185">
    <property type="entry name" value="Transl_elong_KOW-like"/>
</dbReference>
<dbReference type="InterPro" id="IPR001059">
    <property type="entry name" value="Transl_elong_P/YeiP_cen"/>
</dbReference>
<dbReference type="InterPro" id="IPR011768">
    <property type="entry name" value="Transl_elongation_fac_P"/>
</dbReference>
<dbReference type="InterPro" id="IPR008991">
    <property type="entry name" value="Translation_prot_SH3-like_sf"/>
</dbReference>
<dbReference type="NCBIfam" id="TIGR00038">
    <property type="entry name" value="efp"/>
    <property type="match status" value="1"/>
</dbReference>
<dbReference type="NCBIfam" id="NF001810">
    <property type="entry name" value="PRK00529.1"/>
    <property type="match status" value="1"/>
</dbReference>
<dbReference type="PANTHER" id="PTHR30053">
    <property type="entry name" value="ELONGATION FACTOR P"/>
    <property type="match status" value="1"/>
</dbReference>
<dbReference type="PANTHER" id="PTHR30053:SF12">
    <property type="entry name" value="ELONGATION FACTOR P (EF-P) FAMILY PROTEIN"/>
    <property type="match status" value="1"/>
</dbReference>
<dbReference type="Pfam" id="PF01132">
    <property type="entry name" value="EFP"/>
    <property type="match status" value="1"/>
</dbReference>
<dbReference type="Pfam" id="PF08207">
    <property type="entry name" value="EFP_N"/>
    <property type="match status" value="1"/>
</dbReference>
<dbReference type="Pfam" id="PF09285">
    <property type="entry name" value="Elong-fact-P_C"/>
    <property type="match status" value="1"/>
</dbReference>
<dbReference type="PIRSF" id="PIRSF005901">
    <property type="entry name" value="EF-P"/>
    <property type="match status" value="1"/>
</dbReference>
<dbReference type="SMART" id="SM01185">
    <property type="entry name" value="EFP"/>
    <property type="match status" value="1"/>
</dbReference>
<dbReference type="SMART" id="SM00841">
    <property type="entry name" value="Elong-fact-P_C"/>
    <property type="match status" value="1"/>
</dbReference>
<dbReference type="SUPFAM" id="SSF50249">
    <property type="entry name" value="Nucleic acid-binding proteins"/>
    <property type="match status" value="2"/>
</dbReference>
<dbReference type="SUPFAM" id="SSF50104">
    <property type="entry name" value="Translation proteins SH3-like domain"/>
    <property type="match status" value="1"/>
</dbReference>
<feature type="chain" id="PRO_1000010848" description="Elongation factor P">
    <location>
        <begin position="1"/>
        <end position="186"/>
    </location>
</feature>
<evidence type="ECO:0000255" key="1">
    <source>
        <dbReference type="HAMAP-Rule" id="MF_00141"/>
    </source>
</evidence>
<accession>Q082R1</accession>